<reference key="1">
    <citation type="journal article" date="1989" name="Nucleic Acids Res.">
        <title>Wheat phosphoglycerate kinase: evidence for recombination between the genes for the chloroplastic and cytosolic enzymes.</title>
        <authorList>
            <person name="Longstaff M."/>
            <person name="Raines C.A."/>
            <person name="McMorrow E.M."/>
            <person name="Bradbeer J.W."/>
            <person name="Dyer T.A."/>
        </authorList>
    </citation>
    <scope>NUCLEOTIDE SEQUENCE [MRNA]</scope>
    <source>
        <strain>cv. Mardler</strain>
        <tissue>Leaf</tissue>
    </source>
</reference>
<protein>
    <recommendedName>
        <fullName>Phosphoglycerate kinase, cytosolic</fullName>
        <ecNumber evidence="1">2.7.2.3</ecNumber>
    </recommendedName>
</protein>
<proteinExistence type="evidence at transcript level"/>
<name>PGKY_WHEAT</name>
<feature type="chain" id="PRO_0000145872" description="Phosphoglycerate kinase, cytosolic">
    <location>
        <begin position="1"/>
        <end position="401"/>
    </location>
</feature>
<feature type="binding site" evidence="1">
    <location>
        <position position="24"/>
    </location>
    <ligand>
        <name>(2R)-3-phosphoglycerate</name>
        <dbReference type="ChEBI" id="CHEBI:58272"/>
    </ligand>
</feature>
<feature type="binding site" evidence="2">
    <location>
        <position position="25"/>
    </location>
    <ligand>
        <name>(2R)-3-phosphoglycerate</name>
        <dbReference type="ChEBI" id="CHEBI:58272"/>
    </ligand>
</feature>
<feature type="binding site" evidence="2">
    <location>
        <position position="27"/>
    </location>
    <ligand>
        <name>(2R)-3-phosphoglycerate</name>
        <dbReference type="ChEBI" id="CHEBI:58272"/>
    </ligand>
</feature>
<feature type="binding site" evidence="2">
    <location>
        <position position="41"/>
    </location>
    <ligand>
        <name>(2R)-3-phosphoglycerate</name>
        <dbReference type="ChEBI" id="CHEBI:58272"/>
    </ligand>
</feature>
<feature type="binding site" evidence="1">
    <location>
        <position position="63"/>
    </location>
    <ligand>
        <name>(2R)-3-phosphoglycerate</name>
        <dbReference type="ChEBI" id="CHEBI:58272"/>
    </ligand>
</feature>
<feature type="binding site" evidence="2">
    <location>
        <position position="64"/>
    </location>
    <ligand>
        <name>(2R)-3-phosphoglycerate</name>
        <dbReference type="ChEBI" id="CHEBI:58272"/>
    </ligand>
</feature>
<feature type="binding site" evidence="1">
    <location>
        <position position="66"/>
    </location>
    <ligand>
        <name>(2R)-3-phosphoglycerate</name>
        <dbReference type="ChEBI" id="CHEBI:58272"/>
    </ligand>
</feature>
<feature type="binding site" evidence="2">
    <location>
        <position position="67"/>
    </location>
    <ligand>
        <name>(2R)-3-phosphoglycerate</name>
        <dbReference type="ChEBI" id="CHEBI:58272"/>
    </ligand>
</feature>
<feature type="binding site" evidence="2">
    <location>
        <position position="122"/>
    </location>
    <ligand>
        <name>(2R)-3-phosphoglycerate</name>
        <dbReference type="ChEBI" id="CHEBI:58272"/>
    </ligand>
</feature>
<feature type="binding site" evidence="1">
    <location>
        <position position="154"/>
    </location>
    <ligand>
        <name>(2R)-3-phosphoglycerate</name>
        <dbReference type="ChEBI" id="CHEBI:58272"/>
    </ligand>
</feature>
<feature type="binding site" evidence="2">
    <location>
        <position position="155"/>
    </location>
    <ligand>
        <name>(2R)-3-phosphoglycerate</name>
        <dbReference type="ChEBI" id="CHEBI:58272"/>
    </ligand>
</feature>
<feature type="binding site" evidence="1">
    <location>
        <position position="200"/>
    </location>
    <ligand>
        <name>ADP</name>
        <dbReference type="ChEBI" id="CHEBI:456216"/>
    </ligand>
</feature>
<feature type="binding site" evidence="1">
    <location>
        <position position="200"/>
    </location>
    <ligand>
        <name>CDP</name>
        <dbReference type="ChEBI" id="CHEBI:58069"/>
    </ligand>
</feature>
<feature type="binding site" evidence="2">
    <location>
        <position position="202"/>
    </location>
    <ligand>
        <name>AMP</name>
        <dbReference type="ChEBI" id="CHEBI:456215"/>
    </ligand>
</feature>
<feature type="binding site" evidence="2">
    <location>
        <position position="206"/>
    </location>
    <ligand>
        <name>AMP</name>
        <dbReference type="ChEBI" id="CHEBI:456215"/>
    </ligand>
</feature>
<feature type="binding site" evidence="2">
    <location>
        <position position="206"/>
    </location>
    <ligand>
        <name>ATP</name>
        <dbReference type="ChEBI" id="CHEBI:30616"/>
    </ligand>
</feature>
<feature type="binding site" evidence="1">
    <location>
        <position position="224"/>
    </location>
    <ligand>
        <name>ADP</name>
        <dbReference type="ChEBI" id="CHEBI:456216"/>
    </ligand>
</feature>
<feature type="binding site" evidence="1">
    <location>
        <position position="224"/>
    </location>
    <ligand>
        <name>CDP</name>
        <dbReference type="ChEBI" id="CHEBI:58069"/>
    </ligand>
</feature>
<feature type="binding site" evidence="2">
    <location>
        <position position="225"/>
    </location>
    <ligand>
        <name>AMP</name>
        <dbReference type="ChEBI" id="CHEBI:456215"/>
    </ligand>
</feature>
<feature type="binding site" evidence="2">
    <location>
        <position position="225"/>
    </location>
    <ligand>
        <name>ATP</name>
        <dbReference type="ChEBI" id="CHEBI:30616"/>
    </ligand>
</feature>
<feature type="binding site" evidence="2">
    <location>
        <position position="297"/>
    </location>
    <ligand>
        <name>AMP</name>
        <dbReference type="ChEBI" id="CHEBI:456215"/>
    </ligand>
</feature>
<feature type="binding site" evidence="2">
    <location>
        <position position="297"/>
    </location>
    <ligand>
        <name>ATP</name>
        <dbReference type="ChEBI" id="CHEBI:30616"/>
    </ligand>
</feature>
<feature type="binding site" evidence="1">
    <location>
        <position position="322"/>
    </location>
    <ligand>
        <name>CDP</name>
        <dbReference type="ChEBI" id="CHEBI:58069"/>
    </ligand>
</feature>
<feature type="binding site" evidence="1">
    <location>
        <position position="327"/>
    </location>
    <ligand>
        <name>ADP</name>
        <dbReference type="ChEBI" id="CHEBI:456216"/>
    </ligand>
</feature>
<feature type="binding site" evidence="1">
    <location>
        <position position="327"/>
    </location>
    <ligand>
        <name>CDP</name>
        <dbReference type="ChEBI" id="CHEBI:58069"/>
    </ligand>
</feature>
<feature type="binding site" evidence="2">
    <location>
        <position position="328"/>
    </location>
    <ligand>
        <name>AMP</name>
        <dbReference type="ChEBI" id="CHEBI:456215"/>
    </ligand>
</feature>
<feature type="binding site" evidence="2">
    <location>
        <position position="328"/>
    </location>
    <ligand>
        <name>ATP</name>
        <dbReference type="ChEBI" id="CHEBI:30616"/>
    </ligand>
</feature>
<feature type="binding site" evidence="2">
    <location>
        <position position="359"/>
    </location>
    <ligand>
        <name>ATP</name>
        <dbReference type="ChEBI" id="CHEBI:30616"/>
    </ligand>
</feature>
<feature type="binding site" evidence="2">
    <location>
        <position position="359"/>
    </location>
    <ligand>
        <name>Mg(2+)</name>
        <dbReference type="ChEBI" id="CHEBI:18420"/>
    </ligand>
</feature>
<feature type="binding site" evidence="2">
    <location>
        <position position="360"/>
    </location>
    <ligand>
        <name>ATP</name>
        <dbReference type="ChEBI" id="CHEBI:30616"/>
    </ligand>
</feature>
<sequence>MATKRSVGTLGEADLKGKKVFVRADLNVPLDDAQKITDDTRIRASIPTIKYLLEKGAKVILASHLGRPKGVTPKFSLKPLVARLSELLGLEVVMAPDCIGEEVEKLAAALPDGGVLLLENVRFYKEEEKNDPEFAKKLASVADLYVNDAFGTAHRAHASTEGVTKFLRPSVAGFLMQKELDYLVGAVANPKKPFAAIVGGSKVSSKIGVIESLLAKVDILILGGGMIFTFYKAQGLAVGKSLVEEDKLELATSLIETAKSKGVKLLLPTDVVVADKFAADAESKIVPATAIPDGWMGLDVGPDSIKTFAEALDTTKTVIWNGPMGVFEFEKFAAGTDAIAKQLAELTGKGVTTIIGGGDSVAAVEKAGLADKMSHISTGGGASLELLEGKPLPGVLALDEA</sequence>
<dbReference type="EC" id="2.7.2.3" evidence="1"/>
<dbReference type="EMBL" id="X15232">
    <property type="protein sequence ID" value="CAA33302.1"/>
    <property type="molecule type" value="mRNA"/>
</dbReference>
<dbReference type="PIR" id="S05966">
    <property type="entry name" value="TVWTGY"/>
</dbReference>
<dbReference type="RefSeq" id="NP_001392677.1">
    <property type="nucleotide sequence ID" value="NM_001405748.1"/>
</dbReference>
<dbReference type="SMR" id="P12783"/>
<dbReference type="STRING" id="4565.P12783"/>
<dbReference type="PaxDb" id="4565-Traes_6DS_CDB16CE3F.1"/>
<dbReference type="EnsemblPlants" id="TraesARI6B03G03457230.1">
    <property type="protein sequence ID" value="TraesARI6B03G03457230.1"/>
    <property type="gene ID" value="TraesARI6B03G03457230"/>
</dbReference>
<dbReference type="EnsemblPlants" id="TraesCS6B02G187500.2">
    <property type="protein sequence ID" value="TraesCS6B02G187500.2"/>
    <property type="gene ID" value="TraesCS6B02G187500"/>
</dbReference>
<dbReference type="EnsemblPlants" id="TraesCS6B03G0478800.2">
    <property type="protein sequence ID" value="TraesCS6B03G0478800.2.CDS"/>
    <property type="gene ID" value="TraesCS6B03G0478800"/>
</dbReference>
<dbReference type="EnsemblPlants" id="TraesJUL6B03G03520470.2">
    <property type="protein sequence ID" value="TraesJUL6B03G03520470.2"/>
    <property type="gene ID" value="TraesJUL6B03G03520470"/>
</dbReference>
<dbReference type="EnsemblPlants" id="TraesKAR6B01G0148820.1">
    <property type="protein sequence ID" value="cds.TraesKAR6B01G0148820.1"/>
    <property type="gene ID" value="TraesKAR6B01G0148820"/>
</dbReference>
<dbReference type="EnsemblPlants" id="TraesLAC6B03G03453010.1">
    <property type="protein sequence ID" value="TraesLAC6B03G03453010.1"/>
    <property type="gene ID" value="TraesLAC6B03G03453010"/>
</dbReference>
<dbReference type="EnsemblPlants" id="TraesLDM6B03G03503180.1">
    <property type="protein sequence ID" value="TraesLDM6B03G03503180.1"/>
    <property type="gene ID" value="TraesLDM6B03G03503180"/>
</dbReference>
<dbReference type="EnsemblPlants" id="TraesMAC6B03G03497240.1">
    <property type="protein sequence ID" value="TraesMAC6B03G03497240.1"/>
    <property type="gene ID" value="TraesMAC6B03G03497240"/>
</dbReference>
<dbReference type="EnsemblPlants" id="TraesNOR6B03G03532420.1">
    <property type="protein sequence ID" value="TraesNOR6B03G03532420.1"/>
    <property type="gene ID" value="TraesNOR6B03G03532420"/>
</dbReference>
<dbReference type="EnsemblPlants" id="TraesPARA_EIv1.0_2043230.1">
    <property type="protein sequence ID" value="TraesPARA_EIv1.0_2043230.1.CDS"/>
    <property type="gene ID" value="TraesPARA_EIv1.0_2043230"/>
</dbReference>
<dbReference type="EnsemblPlants" id="TraesSYM6B03G03436480.2">
    <property type="protein sequence ID" value="TraesSYM6B03G03436480.2"/>
    <property type="gene ID" value="TraesSYM6B03G03436480"/>
</dbReference>
<dbReference type="GeneID" id="543279"/>
<dbReference type="Gramene" id="TraesARI6B03G03457230.1">
    <property type="protein sequence ID" value="TraesARI6B03G03457230.1"/>
    <property type="gene ID" value="TraesARI6B03G03457230"/>
</dbReference>
<dbReference type="Gramene" id="TraesCS6B02G187500.2">
    <property type="protein sequence ID" value="TraesCS6B02G187500.2"/>
    <property type="gene ID" value="TraesCS6B02G187500"/>
</dbReference>
<dbReference type="Gramene" id="TraesCS6B03G0478800.2">
    <property type="protein sequence ID" value="TraesCS6B03G0478800.2.CDS"/>
    <property type="gene ID" value="TraesCS6B03G0478800"/>
</dbReference>
<dbReference type="Gramene" id="TraesJUL6B03G03520470.2">
    <property type="protein sequence ID" value="TraesJUL6B03G03520470.2"/>
    <property type="gene ID" value="TraesJUL6B03G03520470"/>
</dbReference>
<dbReference type="Gramene" id="TraesKAR6B01G0148820.1">
    <property type="protein sequence ID" value="cds.TraesKAR6B01G0148820.1"/>
    <property type="gene ID" value="TraesKAR6B01G0148820"/>
</dbReference>
<dbReference type="Gramene" id="TraesLAC6B03G03453010.1">
    <property type="protein sequence ID" value="TraesLAC6B03G03453010.1"/>
    <property type="gene ID" value="TraesLAC6B03G03453010"/>
</dbReference>
<dbReference type="Gramene" id="TraesLDM6B03G03503180.1">
    <property type="protein sequence ID" value="TraesLDM6B03G03503180.1"/>
    <property type="gene ID" value="TraesLDM6B03G03503180"/>
</dbReference>
<dbReference type="Gramene" id="TraesMAC6B03G03497240.1">
    <property type="protein sequence ID" value="TraesMAC6B03G03497240.1"/>
    <property type="gene ID" value="TraesMAC6B03G03497240"/>
</dbReference>
<dbReference type="Gramene" id="TraesNOR6B03G03532420.1">
    <property type="protein sequence ID" value="TraesNOR6B03G03532420.1"/>
    <property type="gene ID" value="TraesNOR6B03G03532420"/>
</dbReference>
<dbReference type="Gramene" id="TraesPARA_EIv1.0_2043230.1">
    <property type="protein sequence ID" value="TraesPARA_EIv1.0_2043230.1.CDS"/>
    <property type="gene ID" value="TraesPARA_EIv1.0_2043230"/>
</dbReference>
<dbReference type="Gramene" id="TraesSYM6B03G03436480.2">
    <property type="protein sequence ID" value="TraesSYM6B03G03436480.2"/>
    <property type="gene ID" value="TraesSYM6B03G03436480"/>
</dbReference>
<dbReference type="eggNOG" id="KOG1367">
    <property type="taxonomic scope" value="Eukaryota"/>
</dbReference>
<dbReference type="OMA" id="MGDGYKV"/>
<dbReference type="OrthoDB" id="275353at2759"/>
<dbReference type="UniPathway" id="UPA00109">
    <property type="reaction ID" value="UER00185"/>
</dbReference>
<dbReference type="Proteomes" id="UP000019116">
    <property type="component" value="Chromosome 6B"/>
</dbReference>
<dbReference type="ExpressionAtlas" id="P12783">
    <property type="expression patterns" value="baseline and differential"/>
</dbReference>
<dbReference type="GO" id="GO:0005829">
    <property type="term" value="C:cytosol"/>
    <property type="evidence" value="ECO:0000318"/>
    <property type="project" value="GO_Central"/>
</dbReference>
<dbReference type="GO" id="GO:0043531">
    <property type="term" value="F:ADP binding"/>
    <property type="evidence" value="ECO:0000318"/>
    <property type="project" value="GO_Central"/>
</dbReference>
<dbReference type="GO" id="GO:0005524">
    <property type="term" value="F:ATP binding"/>
    <property type="evidence" value="ECO:0000318"/>
    <property type="project" value="GO_Central"/>
</dbReference>
<dbReference type="GO" id="GO:0046872">
    <property type="term" value="F:metal ion binding"/>
    <property type="evidence" value="ECO:0007669"/>
    <property type="project" value="UniProtKB-KW"/>
</dbReference>
<dbReference type="GO" id="GO:0004618">
    <property type="term" value="F:phosphoglycerate kinase activity"/>
    <property type="evidence" value="ECO:0000318"/>
    <property type="project" value="GO_Central"/>
</dbReference>
<dbReference type="GO" id="GO:0006094">
    <property type="term" value="P:gluconeogenesis"/>
    <property type="evidence" value="ECO:0000318"/>
    <property type="project" value="GO_Central"/>
</dbReference>
<dbReference type="GO" id="GO:0006096">
    <property type="term" value="P:glycolytic process"/>
    <property type="evidence" value="ECO:0000318"/>
    <property type="project" value="GO_Central"/>
</dbReference>
<dbReference type="CDD" id="cd00318">
    <property type="entry name" value="Phosphoglycerate_kinase"/>
    <property type="match status" value="1"/>
</dbReference>
<dbReference type="FunFam" id="3.40.50.1260:FF:000002">
    <property type="entry name" value="Phosphoglycerate kinase"/>
    <property type="match status" value="1"/>
</dbReference>
<dbReference type="FunFam" id="3.40.50.1260:FF:000007">
    <property type="entry name" value="Phosphoglycerate kinase"/>
    <property type="match status" value="1"/>
</dbReference>
<dbReference type="Gene3D" id="3.40.50.1260">
    <property type="entry name" value="Phosphoglycerate kinase, N-terminal domain"/>
    <property type="match status" value="2"/>
</dbReference>
<dbReference type="HAMAP" id="MF_00145">
    <property type="entry name" value="Phosphoglyc_kinase"/>
    <property type="match status" value="1"/>
</dbReference>
<dbReference type="InterPro" id="IPR001576">
    <property type="entry name" value="Phosphoglycerate_kinase"/>
</dbReference>
<dbReference type="InterPro" id="IPR015911">
    <property type="entry name" value="Phosphoglycerate_kinase_CS"/>
</dbReference>
<dbReference type="InterPro" id="IPR015824">
    <property type="entry name" value="Phosphoglycerate_kinase_N"/>
</dbReference>
<dbReference type="InterPro" id="IPR036043">
    <property type="entry name" value="Phosphoglycerate_kinase_sf"/>
</dbReference>
<dbReference type="PANTHER" id="PTHR11406">
    <property type="entry name" value="PHOSPHOGLYCERATE KINASE"/>
    <property type="match status" value="1"/>
</dbReference>
<dbReference type="PANTHER" id="PTHR11406:SF31">
    <property type="entry name" value="PHOSPHOGLYCERATE KINASE, CYTOSOLIC"/>
    <property type="match status" value="1"/>
</dbReference>
<dbReference type="Pfam" id="PF00162">
    <property type="entry name" value="PGK"/>
    <property type="match status" value="1"/>
</dbReference>
<dbReference type="PIRSF" id="PIRSF000724">
    <property type="entry name" value="Pgk"/>
    <property type="match status" value="1"/>
</dbReference>
<dbReference type="PRINTS" id="PR00477">
    <property type="entry name" value="PHGLYCKINASE"/>
</dbReference>
<dbReference type="SUPFAM" id="SSF53748">
    <property type="entry name" value="Phosphoglycerate kinase"/>
    <property type="match status" value="1"/>
</dbReference>
<dbReference type="PROSITE" id="PS00111">
    <property type="entry name" value="PGLYCERATE_KINASE"/>
    <property type="match status" value="1"/>
</dbReference>
<comment type="catalytic activity">
    <reaction evidence="1">
        <text>(2R)-3-phosphoglycerate + ATP = (2R)-3-phospho-glyceroyl phosphate + ADP</text>
        <dbReference type="Rhea" id="RHEA:14801"/>
        <dbReference type="ChEBI" id="CHEBI:30616"/>
        <dbReference type="ChEBI" id="CHEBI:57604"/>
        <dbReference type="ChEBI" id="CHEBI:58272"/>
        <dbReference type="ChEBI" id="CHEBI:456216"/>
        <dbReference type="EC" id="2.7.2.3"/>
    </reaction>
</comment>
<comment type="cofactor">
    <cofactor evidence="1">
        <name>Mg(2+)</name>
        <dbReference type="ChEBI" id="CHEBI:18420"/>
    </cofactor>
</comment>
<comment type="pathway">
    <text>Carbohydrate degradation; glycolysis; pyruvate from D-glyceraldehyde 3-phosphate: step 2/5.</text>
</comment>
<comment type="subunit">
    <text>Monomer.</text>
</comment>
<comment type="subcellular location">
    <subcellularLocation>
        <location>Cytoplasm</location>
    </subcellularLocation>
</comment>
<comment type="similarity">
    <text evidence="3">Belongs to the phosphoglycerate kinase family.</text>
</comment>
<organism>
    <name type="scientific">Triticum aestivum</name>
    <name type="common">Wheat</name>
    <dbReference type="NCBI Taxonomy" id="4565"/>
    <lineage>
        <taxon>Eukaryota</taxon>
        <taxon>Viridiplantae</taxon>
        <taxon>Streptophyta</taxon>
        <taxon>Embryophyta</taxon>
        <taxon>Tracheophyta</taxon>
        <taxon>Spermatophyta</taxon>
        <taxon>Magnoliopsida</taxon>
        <taxon>Liliopsida</taxon>
        <taxon>Poales</taxon>
        <taxon>Poaceae</taxon>
        <taxon>BOP clade</taxon>
        <taxon>Pooideae</taxon>
        <taxon>Triticodae</taxon>
        <taxon>Triticeae</taxon>
        <taxon>Triticinae</taxon>
        <taxon>Triticum</taxon>
    </lineage>
</organism>
<keyword id="KW-0067">ATP-binding</keyword>
<keyword id="KW-0963">Cytoplasm</keyword>
<keyword id="KW-0324">Glycolysis</keyword>
<keyword id="KW-0418">Kinase</keyword>
<keyword id="KW-0460">Magnesium</keyword>
<keyword id="KW-0479">Metal-binding</keyword>
<keyword id="KW-0547">Nucleotide-binding</keyword>
<keyword id="KW-1185">Reference proteome</keyword>
<keyword id="KW-0808">Transferase</keyword>
<evidence type="ECO:0000250" key="1">
    <source>
        <dbReference type="UniProtKB" id="P00558"/>
    </source>
</evidence>
<evidence type="ECO:0000250" key="2">
    <source>
        <dbReference type="UniProtKB" id="Q7SIB7"/>
    </source>
</evidence>
<evidence type="ECO:0000305" key="3"/>
<accession>P12783</accession>